<feature type="chain" id="PRO_1000132783" description="Chorismate synthase">
    <location>
        <begin position="1"/>
        <end position="365"/>
    </location>
</feature>
<feature type="binding site" evidence="1">
    <location>
        <position position="48"/>
    </location>
    <ligand>
        <name>NADP(+)</name>
        <dbReference type="ChEBI" id="CHEBI:58349"/>
    </ligand>
</feature>
<feature type="binding site" evidence="1">
    <location>
        <position position="54"/>
    </location>
    <ligand>
        <name>NADP(+)</name>
        <dbReference type="ChEBI" id="CHEBI:58349"/>
    </ligand>
</feature>
<feature type="binding site" evidence="1">
    <location>
        <begin position="131"/>
        <end position="133"/>
    </location>
    <ligand>
        <name>FMN</name>
        <dbReference type="ChEBI" id="CHEBI:58210"/>
    </ligand>
</feature>
<feature type="binding site" evidence="1">
    <location>
        <begin position="243"/>
        <end position="244"/>
    </location>
    <ligand>
        <name>FMN</name>
        <dbReference type="ChEBI" id="CHEBI:58210"/>
    </ligand>
</feature>
<feature type="binding site" evidence="1">
    <location>
        <position position="288"/>
    </location>
    <ligand>
        <name>FMN</name>
        <dbReference type="ChEBI" id="CHEBI:58210"/>
    </ligand>
</feature>
<feature type="binding site" evidence="1">
    <location>
        <begin position="303"/>
        <end position="307"/>
    </location>
    <ligand>
        <name>FMN</name>
        <dbReference type="ChEBI" id="CHEBI:58210"/>
    </ligand>
</feature>
<feature type="binding site" evidence="1">
    <location>
        <position position="329"/>
    </location>
    <ligand>
        <name>FMN</name>
        <dbReference type="ChEBI" id="CHEBI:58210"/>
    </ligand>
</feature>
<proteinExistence type="inferred from homology"/>
<accession>C3MHI8</accession>
<evidence type="ECO:0000255" key="1">
    <source>
        <dbReference type="HAMAP-Rule" id="MF_00300"/>
    </source>
</evidence>
<protein>
    <recommendedName>
        <fullName evidence="1">Chorismate synthase</fullName>
        <shortName evidence="1">CS</shortName>
        <ecNumber evidence="1">4.2.3.5</ecNumber>
    </recommendedName>
    <alternativeName>
        <fullName evidence="1">5-enolpyruvylshikimate-3-phosphate phospholyase</fullName>
    </alternativeName>
</protein>
<gene>
    <name evidence="1" type="primary">aroC</name>
    <name type="ordered locus">NGR_c05200</name>
</gene>
<dbReference type="EC" id="4.2.3.5" evidence="1"/>
<dbReference type="EMBL" id="CP001389">
    <property type="protein sequence ID" value="ACP24316.1"/>
    <property type="molecule type" value="Genomic_DNA"/>
</dbReference>
<dbReference type="RefSeq" id="WP_012707101.1">
    <property type="nucleotide sequence ID" value="NC_012587.1"/>
</dbReference>
<dbReference type="RefSeq" id="YP_002825069.1">
    <property type="nucleotide sequence ID" value="NC_012587.1"/>
</dbReference>
<dbReference type="SMR" id="C3MHI8"/>
<dbReference type="STRING" id="394.NGR_c05200"/>
<dbReference type="KEGG" id="rhi:NGR_c05200"/>
<dbReference type="PATRIC" id="fig|394.7.peg.3333"/>
<dbReference type="eggNOG" id="COG0082">
    <property type="taxonomic scope" value="Bacteria"/>
</dbReference>
<dbReference type="HOGENOM" id="CLU_034547_0_0_5"/>
<dbReference type="OrthoDB" id="9771806at2"/>
<dbReference type="UniPathway" id="UPA00053">
    <property type="reaction ID" value="UER00090"/>
</dbReference>
<dbReference type="Proteomes" id="UP000001054">
    <property type="component" value="Chromosome"/>
</dbReference>
<dbReference type="GO" id="GO:0005829">
    <property type="term" value="C:cytosol"/>
    <property type="evidence" value="ECO:0007669"/>
    <property type="project" value="TreeGrafter"/>
</dbReference>
<dbReference type="GO" id="GO:0004107">
    <property type="term" value="F:chorismate synthase activity"/>
    <property type="evidence" value="ECO:0007669"/>
    <property type="project" value="UniProtKB-UniRule"/>
</dbReference>
<dbReference type="GO" id="GO:0010181">
    <property type="term" value="F:FMN binding"/>
    <property type="evidence" value="ECO:0007669"/>
    <property type="project" value="TreeGrafter"/>
</dbReference>
<dbReference type="GO" id="GO:0008652">
    <property type="term" value="P:amino acid biosynthetic process"/>
    <property type="evidence" value="ECO:0007669"/>
    <property type="project" value="UniProtKB-KW"/>
</dbReference>
<dbReference type="GO" id="GO:0009073">
    <property type="term" value="P:aromatic amino acid family biosynthetic process"/>
    <property type="evidence" value="ECO:0007669"/>
    <property type="project" value="UniProtKB-KW"/>
</dbReference>
<dbReference type="GO" id="GO:0009423">
    <property type="term" value="P:chorismate biosynthetic process"/>
    <property type="evidence" value="ECO:0007669"/>
    <property type="project" value="UniProtKB-UniRule"/>
</dbReference>
<dbReference type="CDD" id="cd07304">
    <property type="entry name" value="Chorismate_synthase"/>
    <property type="match status" value="1"/>
</dbReference>
<dbReference type="Gene3D" id="3.60.150.10">
    <property type="entry name" value="Chorismate synthase AroC"/>
    <property type="match status" value="1"/>
</dbReference>
<dbReference type="HAMAP" id="MF_00300">
    <property type="entry name" value="Chorismate_synth"/>
    <property type="match status" value="1"/>
</dbReference>
<dbReference type="InterPro" id="IPR000453">
    <property type="entry name" value="Chorismate_synth"/>
</dbReference>
<dbReference type="InterPro" id="IPR035904">
    <property type="entry name" value="Chorismate_synth_AroC_sf"/>
</dbReference>
<dbReference type="InterPro" id="IPR020541">
    <property type="entry name" value="Chorismate_synthase_CS"/>
</dbReference>
<dbReference type="NCBIfam" id="TIGR00033">
    <property type="entry name" value="aroC"/>
    <property type="match status" value="1"/>
</dbReference>
<dbReference type="NCBIfam" id="NF003793">
    <property type="entry name" value="PRK05382.1"/>
    <property type="match status" value="1"/>
</dbReference>
<dbReference type="PANTHER" id="PTHR21085">
    <property type="entry name" value="CHORISMATE SYNTHASE"/>
    <property type="match status" value="1"/>
</dbReference>
<dbReference type="PANTHER" id="PTHR21085:SF0">
    <property type="entry name" value="CHORISMATE SYNTHASE"/>
    <property type="match status" value="1"/>
</dbReference>
<dbReference type="Pfam" id="PF01264">
    <property type="entry name" value="Chorismate_synt"/>
    <property type="match status" value="1"/>
</dbReference>
<dbReference type="PIRSF" id="PIRSF001456">
    <property type="entry name" value="Chorismate_synth"/>
    <property type="match status" value="1"/>
</dbReference>
<dbReference type="SUPFAM" id="SSF103263">
    <property type="entry name" value="Chorismate synthase, AroC"/>
    <property type="match status" value="1"/>
</dbReference>
<dbReference type="PROSITE" id="PS00787">
    <property type="entry name" value="CHORISMATE_SYNTHASE_1"/>
    <property type="match status" value="1"/>
</dbReference>
<dbReference type="PROSITE" id="PS00789">
    <property type="entry name" value="CHORISMATE_SYNTHASE_3"/>
    <property type="match status" value="1"/>
</dbReference>
<sequence>MSHNSFGHLFRVTTWGESHGPALGCVVDGCPPGIRFTLAEIQAWLDKRKPGQSRFVTQRREDDLVKVLSGVMLDDDGETMISTGTPISMMIENTDQRSKDYSEIAKRYRPGHADYTYDVKYGIRDYRGGGRSSARETAARVAAGGIARKVVPGLVVRAALVQIGKHRINRANWDWSEVNNNPFFAPDPAIVPVWEEYLDGIRKAGSSIGAVVEVIAEGVPAGIGAPIYGKLDQDIASNLMSINAVKGVEIGDGFATAELSGEENADEMRIGSDGKPVFLANHAGGILGGIATGQPVVARFAIKPTSSILTERRSIDSDGNEVDVRTKGRHDPCVGIRAVPIGEAMLACTIADHYLRDRGQTGRLK</sequence>
<name>AROC_SINFN</name>
<comment type="function">
    <text evidence="1">Catalyzes the anti-1,4-elimination of the C-3 phosphate and the C-6 proR hydrogen from 5-enolpyruvylshikimate-3-phosphate (EPSP) to yield chorismate, which is the branch point compound that serves as the starting substrate for the three terminal pathways of aromatic amino acid biosynthesis. This reaction introduces a second double bond into the aromatic ring system.</text>
</comment>
<comment type="catalytic activity">
    <reaction evidence="1">
        <text>5-O-(1-carboxyvinyl)-3-phosphoshikimate = chorismate + phosphate</text>
        <dbReference type="Rhea" id="RHEA:21020"/>
        <dbReference type="ChEBI" id="CHEBI:29748"/>
        <dbReference type="ChEBI" id="CHEBI:43474"/>
        <dbReference type="ChEBI" id="CHEBI:57701"/>
        <dbReference type="EC" id="4.2.3.5"/>
    </reaction>
</comment>
<comment type="cofactor">
    <cofactor evidence="1">
        <name>FMNH2</name>
        <dbReference type="ChEBI" id="CHEBI:57618"/>
    </cofactor>
    <text evidence="1">Reduced FMN (FMNH(2)).</text>
</comment>
<comment type="pathway">
    <text evidence="1">Metabolic intermediate biosynthesis; chorismate biosynthesis; chorismate from D-erythrose 4-phosphate and phosphoenolpyruvate: step 7/7.</text>
</comment>
<comment type="subunit">
    <text evidence="1">Homotetramer.</text>
</comment>
<comment type="similarity">
    <text evidence="1">Belongs to the chorismate synthase family.</text>
</comment>
<organism>
    <name type="scientific">Sinorhizobium fredii (strain NBRC 101917 / NGR234)</name>
    <dbReference type="NCBI Taxonomy" id="394"/>
    <lineage>
        <taxon>Bacteria</taxon>
        <taxon>Pseudomonadati</taxon>
        <taxon>Pseudomonadota</taxon>
        <taxon>Alphaproteobacteria</taxon>
        <taxon>Hyphomicrobiales</taxon>
        <taxon>Rhizobiaceae</taxon>
        <taxon>Sinorhizobium/Ensifer group</taxon>
        <taxon>Sinorhizobium</taxon>
    </lineage>
</organism>
<reference key="1">
    <citation type="journal article" date="2009" name="Appl. Environ. Microbiol.">
        <title>Rhizobium sp. strain NGR234 possesses a remarkable number of secretion systems.</title>
        <authorList>
            <person name="Schmeisser C."/>
            <person name="Liesegang H."/>
            <person name="Krysciak D."/>
            <person name="Bakkou N."/>
            <person name="Le Quere A."/>
            <person name="Wollherr A."/>
            <person name="Heinemeyer I."/>
            <person name="Morgenstern B."/>
            <person name="Pommerening-Roeser A."/>
            <person name="Flores M."/>
            <person name="Palacios R."/>
            <person name="Brenner S."/>
            <person name="Gottschalk G."/>
            <person name="Schmitz R.A."/>
            <person name="Broughton W.J."/>
            <person name="Perret X."/>
            <person name="Strittmatter A.W."/>
            <person name="Streit W.R."/>
        </authorList>
    </citation>
    <scope>NUCLEOTIDE SEQUENCE [LARGE SCALE GENOMIC DNA]</scope>
    <source>
        <strain>NBRC 101917 / NGR234</strain>
    </source>
</reference>
<keyword id="KW-0028">Amino-acid biosynthesis</keyword>
<keyword id="KW-0057">Aromatic amino acid biosynthesis</keyword>
<keyword id="KW-0274">FAD</keyword>
<keyword id="KW-0285">Flavoprotein</keyword>
<keyword id="KW-0288">FMN</keyword>
<keyword id="KW-0456">Lyase</keyword>
<keyword id="KW-0521">NADP</keyword>
<keyword id="KW-1185">Reference proteome</keyword>